<keyword id="KW-0472">Membrane</keyword>
<keyword id="KW-0602">Photosynthesis</keyword>
<keyword id="KW-0604">Photosystem II</keyword>
<keyword id="KW-0934">Plastid</keyword>
<keyword id="KW-0674">Reaction center</keyword>
<keyword id="KW-0812">Transmembrane</keyword>
<keyword id="KW-1133">Transmembrane helix</keyword>
<organism>
    <name type="scientific">Cuscuta pentagona</name>
    <name type="common">Five-angled dodder</name>
    <dbReference type="NCBI Taxonomy" id="112407"/>
    <lineage>
        <taxon>Eukaryota</taxon>
        <taxon>Viridiplantae</taxon>
        <taxon>Streptophyta</taxon>
        <taxon>Embryophyta</taxon>
        <taxon>Tracheophyta</taxon>
        <taxon>Spermatophyta</taxon>
        <taxon>Magnoliopsida</taxon>
        <taxon>eudicotyledons</taxon>
        <taxon>Gunneridae</taxon>
        <taxon>Pentapetalae</taxon>
        <taxon>asterids</taxon>
        <taxon>lamiids</taxon>
        <taxon>Solanales</taxon>
        <taxon>Convolvulaceae</taxon>
        <taxon>Cuscuteae</taxon>
        <taxon>Cuscuta</taxon>
        <taxon>Cuscuta subgen. Grammica</taxon>
        <taxon>Cuscuta sect. Cleistogrammica</taxon>
    </lineage>
</organism>
<comment type="function">
    <text evidence="1">One of the components of the core complex of photosystem II (PSII). PSII is a light-driven water:plastoquinone oxidoreductase that uses light energy to abstract electrons from H(2)O, generating O(2) and a proton gradient subsequently used for ATP formation. It consists of a core antenna complex that captures photons, and an electron transfer chain that converts photonic excitation into a charge separation. This subunit is found at the monomer-monomer interface and is required for correct PSII assembly and/or dimerization.</text>
</comment>
<comment type="subunit">
    <text evidence="1">PSII is composed of 1 copy each of membrane proteins PsbA, PsbB, PsbC, PsbD, PsbE, PsbF, PsbH, PsbI, PsbJ, PsbK, PsbL, PsbM, PsbT, PsbX, PsbY, PsbZ, Psb30/Ycf12, at least 3 peripheral proteins of the oxygen-evolving complex and a large number of cofactors. It forms dimeric complexes.</text>
</comment>
<comment type="subcellular location">
    <subcellularLocation>
        <location evidence="2">Plastid membrane</location>
        <topology evidence="1">Single-pass membrane protein</topology>
    </subcellularLocation>
</comment>
<comment type="similarity">
    <text evidence="1">Belongs to the PsbL family.</text>
</comment>
<comment type="caution">
    <text evidence="2">Young tissue from this organism is photosynthetic and contains some thylakoids, although the photosynthetic activity does not exceed the light compensation point.</text>
</comment>
<evidence type="ECO:0000255" key="1">
    <source>
        <dbReference type="HAMAP-Rule" id="MF_01317"/>
    </source>
</evidence>
<evidence type="ECO:0000305" key="2"/>
<protein>
    <recommendedName>
        <fullName evidence="1">Photosystem II reaction center protein L</fullName>
        <shortName evidence="1">PSII-L</shortName>
    </recommendedName>
</protein>
<dbReference type="EMBL" id="AY100952">
    <property type="protein sequence ID" value="AAM53420.1"/>
    <property type="molecule type" value="Genomic_DNA"/>
</dbReference>
<dbReference type="SMR" id="Q8MAW2"/>
<dbReference type="GO" id="GO:0009539">
    <property type="term" value="C:photosystem II reaction center"/>
    <property type="evidence" value="ECO:0007669"/>
    <property type="project" value="InterPro"/>
</dbReference>
<dbReference type="GO" id="GO:0042170">
    <property type="term" value="C:plastid membrane"/>
    <property type="evidence" value="ECO:0007669"/>
    <property type="project" value="UniProtKB-SubCell"/>
</dbReference>
<dbReference type="GO" id="GO:0042651">
    <property type="term" value="C:thylakoid membrane"/>
    <property type="evidence" value="ECO:0007669"/>
    <property type="project" value="UniProtKB-UniRule"/>
</dbReference>
<dbReference type="GO" id="GO:0015979">
    <property type="term" value="P:photosynthesis"/>
    <property type="evidence" value="ECO:0007669"/>
    <property type="project" value="UniProtKB-UniRule"/>
</dbReference>
<dbReference type="HAMAP" id="MF_01317">
    <property type="entry name" value="PSII_PsbL"/>
    <property type="match status" value="1"/>
</dbReference>
<dbReference type="InterPro" id="IPR003372">
    <property type="entry name" value="PSII_PsbL"/>
</dbReference>
<dbReference type="InterPro" id="IPR037266">
    <property type="entry name" value="PSII_PsbL_sf"/>
</dbReference>
<dbReference type="Pfam" id="PF02419">
    <property type="entry name" value="PsbL"/>
    <property type="match status" value="1"/>
</dbReference>
<dbReference type="SUPFAM" id="SSF161017">
    <property type="entry name" value="Photosystem II reaction center protein L, PsbL"/>
    <property type="match status" value="1"/>
</dbReference>
<feature type="chain" id="PRO_0000219705" description="Photosystem II reaction center protein L">
    <location>
        <begin position="1"/>
        <end position="39"/>
    </location>
</feature>
<feature type="transmembrane region" description="Helical" evidence="1">
    <location>
        <begin position="18"/>
        <end position="38"/>
    </location>
</feature>
<name>PSBL_CUSPE</name>
<sequence>MTQQSNPNEQTVELNRTILYWGLLLIFVLAVLFSNYFFN</sequence>
<proteinExistence type="inferred from homology"/>
<accession>Q8MAW2</accession>
<geneLocation type="plastid"/>
<reference key="1">
    <citation type="journal article" date="2002" name="Am. J. Bot.">
        <title>Monophyly of the Convolvulaceae and circumscription of their major lineages based on DNA sequences of multiple chloroplast loci.</title>
        <authorList>
            <person name="Stefanovic S."/>
            <person name="Krueger L."/>
            <person name="Olmstead R.G."/>
        </authorList>
        <dbReference type="AGRICOLA" id="IND23320510"/>
    </citation>
    <scope>NUCLEOTIDE SEQUENCE [GENOMIC DNA]</scope>
</reference>
<gene>
    <name evidence="1" type="primary">psbL</name>
</gene>